<dbReference type="EMBL" id="CP000263">
    <property type="protein sequence ID" value="ABJ90781.1"/>
    <property type="molecule type" value="Genomic_DNA"/>
</dbReference>
<dbReference type="RefSeq" id="WP_011672700.1">
    <property type="nucleotide sequence ID" value="NC_008513.1"/>
</dbReference>
<dbReference type="SMR" id="Q057B8"/>
<dbReference type="STRING" id="372461.BCc_327"/>
<dbReference type="KEGG" id="bcc:BCc_327"/>
<dbReference type="eggNOG" id="COG0096">
    <property type="taxonomic scope" value="Bacteria"/>
</dbReference>
<dbReference type="HOGENOM" id="CLU_098428_0_0_6"/>
<dbReference type="OrthoDB" id="9802617at2"/>
<dbReference type="Proteomes" id="UP000000669">
    <property type="component" value="Chromosome"/>
</dbReference>
<dbReference type="GO" id="GO:1990904">
    <property type="term" value="C:ribonucleoprotein complex"/>
    <property type="evidence" value="ECO:0007669"/>
    <property type="project" value="UniProtKB-KW"/>
</dbReference>
<dbReference type="GO" id="GO:0005840">
    <property type="term" value="C:ribosome"/>
    <property type="evidence" value="ECO:0007669"/>
    <property type="project" value="UniProtKB-KW"/>
</dbReference>
<dbReference type="GO" id="GO:0019843">
    <property type="term" value="F:rRNA binding"/>
    <property type="evidence" value="ECO:0007669"/>
    <property type="project" value="UniProtKB-UniRule"/>
</dbReference>
<dbReference type="GO" id="GO:0003735">
    <property type="term" value="F:structural constituent of ribosome"/>
    <property type="evidence" value="ECO:0007669"/>
    <property type="project" value="InterPro"/>
</dbReference>
<dbReference type="GO" id="GO:0006412">
    <property type="term" value="P:translation"/>
    <property type="evidence" value="ECO:0007669"/>
    <property type="project" value="UniProtKB-UniRule"/>
</dbReference>
<dbReference type="FunFam" id="3.30.1490.10:FF:000001">
    <property type="entry name" value="30S ribosomal protein S8"/>
    <property type="match status" value="1"/>
</dbReference>
<dbReference type="Gene3D" id="3.30.1370.30">
    <property type="match status" value="1"/>
</dbReference>
<dbReference type="Gene3D" id="3.30.1490.10">
    <property type="match status" value="1"/>
</dbReference>
<dbReference type="HAMAP" id="MF_01302_B">
    <property type="entry name" value="Ribosomal_uS8_B"/>
    <property type="match status" value="1"/>
</dbReference>
<dbReference type="InterPro" id="IPR000630">
    <property type="entry name" value="Ribosomal_uS8"/>
</dbReference>
<dbReference type="InterPro" id="IPR047863">
    <property type="entry name" value="Ribosomal_uS8_CS"/>
</dbReference>
<dbReference type="InterPro" id="IPR035987">
    <property type="entry name" value="Ribosomal_uS8_sf"/>
</dbReference>
<dbReference type="NCBIfam" id="NF001109">
    <property type="entry name" value="PRK00136.1"/>
    <property type="match status" value="1"/>
</dbReference>
<dbReference type="PANTHER" id="PTHR11758">
    <property type="entry name" value="40S RIBOSOMAL PROTEIN S15A"/>
    <property type="match status" value="1"/>
</dbReference>
<dbReference type="Pfam" id="PF00410">
    <property type="entry name" value="Ribosomal_S8"/>
    <property type="match status" value="1"/>
</dbReference>
<dbReference type="SUPFAM" id="SSF56047">
    <property type="entry name" value="Ribosomal protein S8"/>
    <property type="match status" value="1"/>
</dbReference>
<dbReference type="PROSITE" id="PS00053">
    <property type="entry name" value="RIBOSOMAL_S8"/>
    <property type="match status" value="1"/>
</dbReference>
<name>RS8_BUCCC</name>
<reference key="1">
    <citation type="journal article" date="2006" name="Science">
        <title>A small microbial genome: the end of a long symbiotic relationship?</title>
        <authorList>
            <person name="Perez-Brocal V."/>
            <person name="Gil R."/>
            <person name="Ramos S."/>
            <person name="Lamelas A."/>
            <person name="Postigo M."/>
            <person name="Michelena J.M."/>
            <person name="Silva F.J."/>
            <person name="Moya A."/>
            <person name="Latorre A."/>
        </authorList>
    </citation>
    <scope>NUCLEOTIDE SEQUENCE [LARGE SCALE GENOMIC DNA]</scope>
    <source>
        <strain>Cc</strain>
    </source>
</reference>
<comment type="function">
    <text evidence="1">One of the primary rRNA binding proteins, it binds directly to 16S rRNA central domain where it helps coordinate assembly of the platform of the 30S subunit.</text>
</comment>
<comment type="subunit">
    <text evidence="1">Part of the 30S ribosomal subunit. Contacts proteins S5 and S12.</text>
</comment>
<comment type="similarity">
    <text evidence="1">Belongs to the universal ribosomal protein uS8 family.</text>
</comment>
<feature type="chain" id="PRO_0000290810" description="Small ribosomal subunit protein uS8">
    <location>
        <begin position="1"/>
        <end position="130"/>
    </location>
</feature>
<gene>
    <name evidence="1" type="primary">rpsH</name>
    <name type="ordered locus">BCc_327</name>
</gene>
<proteinExistence type="inferred from homology"/>
<protein>
    <recommendedName>
        <fullName evidence="1">Small ribosomal subunit protein uS8</fullName>
    </recommendedName>
    <alternativeName>
        <fullName evidence="2">30S ribosomal protein S8</fullName>
    </alternativeName>
</protein>
<accession>Q057B8</accession>
<organism>
    <name type="scientific">Buchnera aphidicola subsp. Cinara cedri (strain Cc)</name>
    <dbReference type="NCBI Taxonomy" id="372461"/>
    <lineage>
        <taxon>Bacteria</taxon>
        <taxon>Pseudomonadati</taxon>
        <taxon>Pseudomonadota</taxon>
        <taxon>Gammaproteobacteria</taxon>
        <taxon>Enterobacterales</taxon>
        <taxon>Erwiniaceae</taxon>
        <taxon>Buchnera</taxon>
    </lineage>
</organism>
<evidence type="ECO:0000255" key="1">
    <source>
        <dbReference type="HAMAP-Rule" id="MF_01302"/>
    </source>
</evidence>
<evidence type="ECO:0000305" key="2"/>
<keyword id="KW-1185">Reference proteome</keyword>
<keyword id="KW-0687">Ribonucleoprotein</keyword>
<keyword id="KW-0689">Ribosomal protein</keyword>
<keyword id="KW-0694">RNA-binding</keyword>
<keyword id="KW-0699">rRNA-binding</keyword>
<sequence length="130" mass="15003">MSMQDPIADMITCIRNGQFSNKIFVIVPFSRLKENIVKVLKFEGYIINYKIKKNNNKVLKIFLKYFNGKSVIENIKRISRPSLRRYCNKRNLPIVMNNLGIAIISTSRGVMTDRIAREKGLGGEIICYVD</sequence>